<proteinExistence type="inferred from homology"/>
<sequence length="166" mass="19612">MNEDLISQIKEVVTAENQEKLIKIIQLLESSNYELRGKINPDLQLSASALVFKEDKLFFIEHPYQKELLLPAGHVELKESPLDTAIREFHEETGFFAKKMGKLVDVNLIDIPFNETKNEKKHQHIDFRYLLELEEQEAELAELPFFLLELEEAPEEFKKYYRYKNI</sequence>
<keyword id="KW-0289">Folate biosynthesis</keyword>
<keyword id="KW-0378">Hydrolase</keyword>
<keyword id="KW-0460">Magnesium</keyword>
<keyword id="KW-0479">Metal-binding</keyword>
<keyword id="KW-0554">One-carbon metabolism</keyword>
<comment type="function">
    <text evidence="1">Probably mediates the removal of pyrophosphate from dihydroneopterin triphosphate (DHNTP), a possible step in the pterin branch of the folate synthesis pathway.</text>
</comment>
<comment type="cofactor">
    <cofactor evidence="1">
        <name>Mg(2+)</name>
        <dbReference type="ChEBI" id="CHEBI:18420"/>
    </cofactor>
</comment>
<comment type="pathway">
    <text>Cofactor biosynthesis; tetrahydrofolate biosynthesis; 2-amino-4-hydroxy-6-hydroxymethyl-7,8-dihydropteridine diphosphate from 7,8-dihydroneopterin triphosphate: step 1/4.</text>
</comment>
<comment type="subunit">
    <text evidence="1">Monomer.</text>
</comment>
<comment type="similarity">
    <text evidence="3">Belongs to the Nudix hydrolase family.</text>
</comment>
<reference key="1">
    <citation type="journal article" date="2003" name="Appl. Environ. Microbiol.">
        <title>Increased production of folate by metabolic engineering of Lactococcus lactis.</title>
        <authorList>
            <person name="Sybesma W."/>
            <person name="Starrenburg M."/>
            <person name="Kleerebezem M."/>
            <person name="Mierau I."/>
            <person name="de Vos W.M."/>
            <person name="Hugenholtz J."/>
        </authorList>
    </citation>
    <scope>NUCLEOTIDE SEQUENCE [GENOMIC DNA]</scope>
    <source>
        <strain>MG1363</strain>
    </source>
</reference>
<reference key="2">
    <citation type="journal article" date="2007" name="J. Bacteriol.">
        <title>The complete genome sequence of the lactic acid bacterial paradigm Lactococcus lactis subsp. cremoris MG1363.</title>
        <authorList>
            <person name="Wegmann U."/>
            <person name="O'Connell-Motherway M."/>
            <person name="Zomer A."/>
            <person name="Buist G."/>
            <person name="Shearman C."/>
            <person name="Canchaya C."/>
            <person name="Ventura M."/>
            <person name="Goesmann A."/>
            <person name="Gasson M.J."/>
            <person name="Kuipers O.P."/>
            <person name="van Sinderen D."/>
            <person name="Kok J."/>
        </authorList>
    </citation>
    <scope>NUCLEOTIDE SEQUENCE [LARGE SCALE GENOMIC DNA]</scope>
    <source>
        <strain>MG1363</strain>
    </source>
</reference>
<dbReference type="EC" id="3.6.1.-"/>
<dbReference type="EMBL" id="AY156932">
    <property type="protein sequence ID" value="AAN64308.1"/>
    <property type="molecule type" value="Genomic_DNA"/>
</dbReference>
<dbReference type="EMBL" id="AM406671">
    <property type="protein sequence ID" value="CAL97926.1"/>
    <property type="molecule type" value="Genomic_DNA"/>
</dbReference>
<dbReference type="RefSeq" id="WP_011835208.1">
    <property type="nucleotide sequence ID" value="NC_009004.1"/>
</dbReference>
<dbReference type="SMR" id="P0CI35"/>
<dbReference type="STRING" id="416870.llmg_1335"/>
<dbReference type="KEGG" id="llm:llmg_1335"/>
<dbReference type="eggNOG" id="COG1051">
    <property type="taxonomic scope" value="Bacteria"/>
</dbReference>
<dbReference type="HOGENOM" id="CLU_131409_0_0_9"/>
<dbReference type="OrthoDB" id="9787476at2"/>
<dbReference type="UniPathway" id="UPA00077">
    <property type="reaction ID" value="UER00152"/>
</dbReference>
<dbReference type="Proteomes" id="UP000000364">
    <property type="component" value="Chromosome"/>
</dbReference>
<dbReference type="GO" id="GO:0016787">
    <property type="term" value="F:hydrolase activity"/>
    <property type="evidence" value="ECO:0007669"/>
    <property type="project" value="UniProtKB-KW"/>
</dbReference>
<dbReference type="GO" id="GO:0046872">
    <property type="term" value="F:metal ion binding"/>
    <property type="evidence" value="ECO:0007669"/>
    <property type="project" value="UniProtKB-KW"/>
</dbReference>
<dbReference type="GO" id="GO:0046656">
    <property type="term" value="P:folic acid biosynthetic process"/>
    <property type="evidence" value="ECO:0007669"/>
    <property type="project" value="UniProtKB-KW"/>
</dbReference>
<dbReference type="GO" id="GO:0006730">
    <property type="term" value="P:one-carbon metabolic process"/>
    <property type="evidence" value="ECO:0007669"/>
    <property type="project" value="UniProtKB-KW"/>
</dbReference>
<dbReference type="GO" id="GO:0046654">
    <property type="term" value="P:tetrahydrofolate biosynthetic process"/>
    <property type="evidence" value="ECO:0007669"/>
    <property type="project" value="UniProtKB-UniPathway"/>
</dbReference>
<dbReference type="Gene3D" id="3.90.79.10">
    <property type="entry name" value="Nucleoside Triphosphate Pyrophosphohydrolase"/>
    <property type="match status" value="1"/>
</dbReference>
<dbReference type="InterPro" id="IPR015797">
    <property type="entry name" value="NUDIX_hydrolase-like_dom_sf"/>
</dbReference>
<dbReference type="InterPro" id="IPR020084">
    <property type="entry name" value="NUDIX_hydrolase_CS"/>
</dbReference>
<dbReference type="InterPro" id="IPR000086">
    <property type="entry name" value="NUDIX_hydrolase_dom"/>
</dbReference>
<dbReference type="PANTHER" id="PTHR43736">
    <property type="entry name" value="ADP-RIBOSE PYROPHOSPHATASE"/>
    <property type="match status" value="1"/>
</dbReference>
<dbReference type="PANTHER" id="PTHR43736:SF1">
    <property type="entry name" value="DIHYDRONEOPTERIN TRIPHOSPHATE DIPHOSPHATASE"/>
    <property type="match status" value="1"/>
</dbReference>
<dbReference type="Pfam" id="PF00293">
    <property type="entry name" value="NUDIX"/>
    <property type="match status" value="1"/>
</dbReference>
<dbReference type="SUPFAM" id="SSF55811">
    <property type="entry name" value="Nudix"/>
    <property type="match status" value="1"/>
</dbReference>
<dbReference type="PROSITE" id="PS51462">
    <property type="entry name" value="NUDIX"/>
    <property type="match status" value="1"/>
</dbReference>
<dbReference type="PROSITE" id="PS00893">
    <property type="entry name" value="NUDIX_BOX"/>
    <property type="match status" value="1"/>
</dbReference>
<evidence type="ECO:0000250" key="1"/>
<evidence type="ECO:0000255" key="2">
    <source>
        <dbReference type="PROSITE-ProRule" id="PRU00794"/>
    </source>
</evidence>
<evidence type="ECO:0000305" key="3"/>
<accession>P0CI35</accession>
<accession>A2RKW0</accession>
<accession>Q8GJP2</accession>
<name>FOLQ_LACLM</name>
<protein>
    <recommendedName>
        <fullName>Probable DHNTP pyrophosphohydrolase</fullName>
        <ecNumber>3.6.1.-</ecNumber>
    </recommendedName>
    <alternativeName>
        <fullName>Dihydroneopterin triphosphate pyrophosphohydrolase</fullName>
    </alternativeName>
</protein>
<organism>
    <name type="scientific">Lactococcus lactis subsp. cremoris (strain MG1363)</name>
    <dbReference type="NCBI Taxonomy" id="416870"/>
    <lineage>
        <taxon>Bacteria</taxon>
        <taxon>Bacillati</taxon>
        <taxon>Bacillota</taxon>
        <taxon>Bacilli</taxon>
        <taxon>Lactobacillales</taxon>
        <taxon>Streptococcaceae</taxon>
        <taxon>Lactococcus</taxon>
        <taxon>Lactococcus cremoris subsp. cremoris</taxon>
    </lineage>
</organism>
<feature type="chain" id="PRO_0000057132" description="Probable DHNTP pyrophosphohydrolase">
    <location>
        <begin position="1"/>
        <end position="166"/>
    </location>
</feature>
<feature type="domain" description="Nudix hydrolase" evidence="2">
    <location>
        <begin position="42"/>
        <end position="166"/>
    </location>
</feature>
<feature type="short sequence motif" description="Nudix box">
    <location>
        <begin position="73"/>
        <end position="94"/>
    </location>
</feature>
<feature type="binding site" evidence="1">
    <location>
        <position position="88"/>
    </location>
    <ligand>
        <name>Mg(2+)</name>
        <dbReference type="ChEBI" id="CHEBI:18420"/>
    </ligand>
</feature>
<feature type="binding site" evidence="1">
    <location>
        <position position="92"/>
    </location>
    <ligand>
        <name>Mg(2+)</name>
        <dbReference type="ChEBI" id="CHEBI:18420"/>
    </ligand>
</feature>
<gene>
    <name type="primary">folQ</name>
    <name type="ordered locus">llmg_1335</name>
</gene>